<comment type="function">
    <text evidence="1 2">Lysosomal membrane chaperone required to export cobalamin (vitamin B12) from the lysosome to the cytosol, allowing its conversion to cofactors. Targets ABCD4 transporter from the endoplasmic reticulum to the lysosome. Then forms a complex with lysosomal ABCD4 and cytoplasmic MMACHC to transport cobalamin across the lysosomal membrane (By similarity). Acts as an adapter protein which plays an important role in mediating and regulating the internalization of the insulin receptor (INSR) (By similarity). Involved in clathrin-mediated endocytosis of INSR via its interaction with adapter protein complex 2 (By similarity). Essential for the initiation of gastrulation and early formation of mesoderm structures during embryogenesis (By similarity).</text>
</comment>
<comment type="subunit">
    <text evidence="1 2">Interacts with ABCD4; this interaction induces the translocation of ABCD4 from the endoplasmic reticulum to the lysosome. Interacts with ABCD4 and MMACHC; this interaction ensures the transport of cobalamin from the lysosome to the cytoplasm (By similarity). Interacts with INSR, adapter protein complex 2 and clathrin heavy chain (By similarity).</text>
</comment>
<comment type="subcellular location">
    <subcellularLocation>
        <location evidence="2">Endoplasmic reticulum membrane</location>
    </subcellularLocation>
    <subcellularLocation>
        <location evidence="2">Lysosome membrane</location>
        <topology evidence="3">Multi-pass membrane protein</topology>
    </subcellularLocation>
    <subcellularLocation>
        <location evidence="1">Cell membrane</location>
        <topology evidence="3">Multi-pass membrane protein</topology>
    </subcellularLocation>
    <subcellularLocation>
        <location evidence="1">Cytoplasmic vesicle</location>
        <location evidence="1">Clathrin-coated vesicle</location>
    </subcellularLocation>
</comment>
<comment type="PTM">
    <text evidence="2">N-glycosylated.</text>
</comment>
<comment type="similarity">
    <text evidence="4">Belongs to the LIMR family. LMBRD1 subfamily.</text>
</comment>
<name>LMBD1_BOVIN</name>
<keyword id="KW-1003">Cell membrane</keyword>
<keyword id="KW-0846">Cobalamin</keyword>
<keyword id="KW-0170">Cobalt</keyword>
<keyword id="KW-0968">Cytoplasmic vesicle</keyword>
<keyword id="KW-0217">Developmental protein</keyword>
<keyword id="KW-0254">Endocytosis</keyword>
<keyword id="KW-0256">Endoplasmic reticulum</keyword>
<keyword id="KW-0306">Gastrulation</keyword>
<keyword id="KW-0325">Glycoprotein</keyword>
<keyword id="KW-0458">Lysosome</keyword>
<keyword id="KW-0472">Membrane</keyword>
<keyword id="KW-0597">Phosphoprotein</keyword>
<keyword id="KW-1185">Reference proteome</keyword>
<keyword id="KW-0812">Transmembrane</keyword>
<keyword id="KW-1133">Transmembrane helix</keyword>
<keyword id="KW-0813">Transport</keyword>
<proteinExistence type="evidence at transcript level"/>
<sequence length="543" mass="62022">MAAAAAGAASAELVIGWCIFGLLLLAILAFCWIYVRKYQSQRESEVVSTITAIFSLAIALITSALLPVDIFLVSYMKNQNGTFKDWANGNVSRQIEDTVLYGYYTLYSVILFCVFFWIPFVYFYYEEKDDDDTGKCTQVKMALKYTLGFVVICALLLLVGAFVPLNLPDNKNSTEWEKVKFLFEELGSSHGLAALSFSISSLTLVGMLAAIIYTAYGMSALPLNLIKGTRNAAYERLENTEDIEEVEQHIQTIKSKSKDGRPLPARDRRALKQFEERLRTLRKRERRLEFIENSWWTKFCGALRPLKIIWGIFFIFVALLFVISLFLSNLDKALHSAGIDSGFIIFGANLSNPLNMLLPLLQTVFPLDYILITIIIMYFIFTSMAGIRNIGIWFFWIRLYKIRRGRTRPQALLFLCMILLLIVLHTSYMIYSLAPQYVMYGSQNYLIESNMTYNDHRGNSSLSVPKRCDADAPEDQCTVTRTYLFLHKFWFFSAAYYFGNWAFLGVFIVGFIVSCCKGKKSVLERVDEDDSDLSDDEPSLYSV</sequence>
<feature type="chain" id="PRO_0000260514" description="Lysosomal cobalamin transport escort protein LMBD1">
    <location>
        <begin position="1"/>
        <end position="543"/>
    </location>
</feature>
<feature type="topological domain" description="Extracellular" evidence="3">
    <location>
        <begin position="1"/>
        <end position="12"/>
    </location>
</feature>
<feature type="transmembrane region" description="Helical; Name=1" evidence="3">
    <location>
        <begin position="13"/>
        <end position="33"/>
    </location>
</feature>
<feature type="topological domain" description="Cytoplasmic" evidence="3">
    <location>
        <begin position="34"/>
        <end position="52"/>
    </location>
</feature>
<feature type="transmembrane region" description="Helical; Name=2" evidence="3">
    <location>
        <begin position="53"/>
        <end position="73"/>
    </location>
</feature>
<feature type="topological domain" description="Extracellular" evidence="3">
    <location>
        <begin position="74"/>
        <end position="102"/>
    </location>
</feature>
<feature type="transmembrane region" description="Helical; Name=3" evidence="3">
    <location>
        <begin position="103"/>
        <end position="123"/>
    </location>
</feature>
<feature type="topological domain" description="Cytoplasmic" evidence="3">
    <location>
        <begin position="124"/>
        <end position="146"/>
    </location>
</feature>
<feature type="transmembrane region" description="Helical; Name=4" evidence="3">
    <location>
        <begin position="147"/>
        <end position="167"/>
    </location>
</feature>
<feature type="topological domain" description="Extracellular" evidence="3">
    <location>
        <begin position="168"/>
        <end position="190"/>
    </location>
</feature>
<feature type="transmembrane region" description="Helical; Name=5" evidence="3">
    <location>
        <begin position="191"/>
        <end position="211"/>
    </location>
</feature>
<feature type="topological domain" description="Cytoplasmic" evidence="3">
    <location>
        <begin position="212"/>
        <end position="307"/>
    </location>
</feature>
<feature type="transmembrane region" description="Helical; Name=6" evidence="3">
    <location>
        <begin position="308"/>
        <end position="328"/>
    </location>
</feature>
<feature type="topological domain" description="Extracellular" evidence="3">
    <location>
        <begin position="329"/>
        <end position="366"/>
    </location>
</feature>
<feature type="transmembrane region" description="Helical; Name=7" evidence="3">
    <location>
        <begin position="367"/>
        <end position="387"/>
    </location>
</feature>
<feature type="topological domain" description="Cytoplasmic" evidence="3">
    <location>
        <begin position="388"/>
        <end position="410"/>
    </location>
</feature>
<feature type="transmembrane region" description="Helical; Name=8" evidence="3">
    <location>
        <begin position="411"/>
        <end position="431"/>
    </location>
</feature>
<feature type="topological domain" description="Extracellular" evidence="3">
    <location>
        <begin position="432"/>
        <end position="488"/>
    </location>
</feature>
<feature type="transmembrane region" description="Helical; Name=9" evidence="3">
    <location>
        <begin position="489"/>
        <end position="509"/>
    </location>
</feature>
<feature type="topological domain" description="Cytoplasmic" evidence="3">
    <location>
        <begin position="510"/>
        <end position="543"/>
    </location>
</feature>
<feature type="short sequence motif" description="YERL motif; mediates interaction with adapter protein complex 2 and is essential for its function in clathrin-mediated endocytosis of INSR" evidence="1">
    <location>
        <begin position="234"/>
        <end position="237"/>
    </location>
</feature>
<feature type="short sequence motif" description="WTKF motif; mediates interaction with adapter protein complex 2 and is essential for its function in clathrin-mediated endocytosis of INSR" evidence="1">
    <location>
        <begin position="296"/>
        <end position="299"/>
    </location>
</feature>
<feature type="modified residue" description="Phosphothreonine" evidence="1">
    <location>
        <position position="240"/>
    </location>
</feature>
<feature type="modified residue" description="Phosphoserine" evidence="2">
    <location>
        <position position="531"/>
    </location>
</feature>
<feature type="modified residue" description="Phosphoserine" evidence="2">
    <location>
        <position position="534"/>
    </location>
</feature>
<feature type="glycosylation site" description="N-linked (GlcNAc...) asparagine" evidence="3">
    <location>
        <position position="80"/>
    </location>
</feature>
<feature type="glycosylation site" description="N-linked (GlcNAc...) asparagine" evidence="3">
    <location>
        <position position="90"/>
    </location>
</feature>
<feature type="glycosylation site" description="N-linked (GlcNAc...) asparagine" evidence="3">
    <location>
        <position position="172"/>
    </location>
</feature>
<feature type="glycosylation site" description="N-linked (GlcNAc...) asparagine" evidence="3">
    <location>
        <position position="349"/>
    </location>
</feature>
<feature type="glycosylation site" description="N-linked (GlcNAc...) asparagine" evidence="3">
    <location>
        <position position="450"/>
    </location>
</feature>
<feature type="glycosylation site" description="N-linked (GlcNAc...) asparagine" evidence="3">
    <location>
        <position position="459"/>
    </location>
</feature>
<organism>
    <name type="scientific">Bos taurus</name>
    <name type="common">Bovine</name>
    <dbReference type="NCBI Taxonomy" id="9913"/>
    <lineage>
        <taxon>Eukaryota</taxon>
        <taxon>Metazoa</taxon>
        <taxon>Chordata</taxon>
        <taxon>Craniata</taxon>
        <taxon>Vertebrata</taxon>
        <taxon>Euteleostomi</taxon>
        <taxon>Mammalia</taxon>
        <taxon>Eutheria</taxon>
        <taxon>Laurasiatheria</taxon>
        <taxon>Artiodactyla</taxon>
        <taxon>Ruminantia</taxon>
        <taxon>Pecora</taxon>
        <taxon>Bovidae</taxon>
        <taxon>Bovinae</taxon>
        <taxon>Bos</taxon>
    </lineage>
</organism>
<accession>Q3SYY9</accession>
<evidence type="ECO:0000250" key="1">
    <source>
        <dbReference type="UniProtKB" id="Q8K0B2"/>
    </source>
</evidence>
<evidence type="ECO:0000250" key="2">
    <source>
        <dbReference type="UniProtKB" id="Q9NUN5"/>
    </source>
</evidence>
<evidence type="ECO:0000255" key="3"/>
<evidence type="ECO:0000305" key="4"/>
<dbReference type="EMBL" id="BC103324">
    <property type="protein sequence ID" value="AAI03325.1"/>
    <property type="molecule type" value="mRNA"/>
</dbReference>
<dbReference type="RefSeq" id="NP_001030264.1">
    <property type="nucleotide sequence ID" value="NM_001035092.2"/>
</dbReference>
<dbReference type="SMR" id="Q3SYY9"/>
<dbReference type="FunCoup" id="Q3SYY9">
    <property type="interactions" value="1920"/>
</dbReference>
<dbReference type="STRING" id="9913.ENSBTAP00000021518"/>
<dbReference type="GlyCosmos" id="Q3SYY9">
    <property type="glycosylation" value="6 sites, No reported glycans"/>
</dbReference>
<dbReference type="GlyGen" id="Q3SYY9">
    <property type="glycosylation" value="6 sites"/>
</dbReference>
<dbReference type="PaxDb" id="9913-ENSBTAP00000021518"/>
<dbReference type="GeneID" id="510495"/>
<dbReference type="KEGG" id="bta:510495"/>
<dbReference type="CTD" id="55788"/>
<dbReference type="eggNOG" id="ENOG502QQ2T">
    <property type="taxonomic scope" value="Eukaryota"/>
</dbReference>
<dbReference type="InParanoid" id="Q3SYY9"/>
<dbReference type="OrthoDB" id="73273at2759"/>
<dbReference type="Proteomes" id="UP000009136">
    <property type="component" value="Unplaced"/>
</dbReference>
<dbReference type="GO" id="GO:0045334">
    <property type="term" value="C:clathrin-coated endocytic vesicle"/>
    <property type="evidence" value="ECO:0000250"/>
    <property type="project" value="UniProtKB"/>
</dbReference>
<dbReference type="GO" id="GO:0030136">
    <property type="term" value="C:clathrin-coated vesicle"/>
    <property type="evidence" value="ECO:0000250"/>
    <property type="project" value="UniProtKB"/>
</dbReference>
<dbReference type="GO" id="GO:0005789">
    <property type="term" value="C:endoplasmic reticulum membrane"/>
    <property type="evidence" value="ECO:0000250"/>
    <property type="project" value="UniProtKB"/>
</dbReference>
<dbReference type="GO" id="GO:0005765">
    <property type="term" value="C:lysosomal membrane"/>
    <property type="evidence" value="ECO:0000250"/>
    <property type="project" value="UniProtKB"/>
</dbReference>
<dbReference type="GO" id="GO:0005886">
    <property type="term" value="C:plasma membrane"/>
    <property type="evidence" value="ECO:0000250"/>
    <property type="project" value="UniProtKB"/>
</dbReference>
<dbReference type="GO" id="GO:0035612">
    <property type="term" value="F:AP-2 adaptor complex binding"/>
    <property type="evidence" value="ECO:0000250"/>
    <property type="project" value="UniProtKB"/>
</dbReference>
<dbReference type="GO" id="GO:0032050">
    <property type="term" value="F:clathrin heavy chain binding"/>
    <property type="evidence" value="ECO:0000250"/>
    <property type="project" value="UniProtKB"/>
</dbReference>
<dbReference type="GO" id="GO:0031419">
    <property type="term" value="F:cobalamin binding"/>
    <property type="evidence" value="ECO:0007669"/>
    <property type="project" value="UniProtKB-KW"/>
</dbReference>
<dbReference type="GO" id="GO:0072583">
    <property type="term" value="P:clathrin-dependent endocytosis"/>
    <property type="evidence" value="ECO:0000250"/>
    <property type="project" value="UniProtKB"/>
</dbReference>
<dbReference type="GO" id="GO:0007369">
    <property type="term" value="P:gastrulation"/>
    <property type="evidence" value="ECO:0000250"/>
    <property type="project" value="UniProtKB"/>
</dbReference>
<dbReference type="GO" id="GO:0038016">
    <property type="term" value="P:insulin receptor internalization"/>
    <property type="evidence" value="ECO:0000250"/>
    <property type="project" value="UniProtKB"/>
</dbReference>
<dbReference type="GO" id="GO:0061462">
    <property type="term" value="P:protein localization to lysosome"/>
    <property type="evidence" value="ECO:0000250"/>
    <property type="project" value="UniProtKB"/>
</dbReference>
<dbReference type="InterPro" id="IPR050854">
    <property type="entry name" value="LMBD1_LysCbl_Transport"/>
</dbReference>
<dbReference type="InterPro" id="IPR006876">
    <property type="entry name" value="LMBR1-like_membr_prot"/>
</dbReference>
<dbReference type="PANTHER" id="PTHR16130:SF2">
    <property type="entry name" value="LYSOSOMAL COBALAMIN TRANSPORT ESCORT PROTEIN LMBD1"/>
    <property type="match status" value="1"/>
</dbReference>
<dbReference type="PANTHER" id="PTHR16130">
    <property type="entry name" value="LYSOSOMAL COBALAMIN TRANSPORTER-RELATED"/>
    <property type="match status" value="1"/>
</dbReference>
<dbReference type="Pfam" id="PF04791">
    <property type="entry name" value="LMBR1"/>
    <property type="match status" value="1"/>
</dbReference>
<gene>
    <name type="primary">LMBRD1</name>
</gene>
<protein>
    <recommendedName>
        <fullName evidence="2">Lysosomal cobalamin transport escort protein LMBD1</fullName>
        <shortName>LMBD1</shortName>
    </recommendedName>
    <alternativeName>
        <fullName>LMBR1 domain-containing protein 1</fullName>
    </alternativeName>
</protein>
<reference key="1">
    <citation type="submission" date="2005-08" db="EMBL/GenBank/DDBJ databases">
        <authorList>
            <consortium name="NIH - Mammalian Gene Collection (MGC) project"/>
        </authorList>
    </citation>
    <scope>NUCLEOTIDE SEQUENCE [LARGE SCALE MRNA]</scope>
    <source>
        <strain>Crossbred X Angus</strain>
        <tissue>Ileum</tissue>
    </source>
</reference>